<protein>
    <recommendedName>
        <fullName evidence="1">Large ribosomal subunit protein uL18</fullName>
    </recommendedName>
    <alternativeName>
        <fullName evidence="2">50S ribosomal protein L18</fullName>
    </alternativeName>
</protein>
<evidence type="ECO:0000255" key="1">
    <source>
        <dbReference type="HAMAP-Rule" id="MF_01337"/>
    </source>
</evidence>
<evidence type="ECO:0000305" key="2"/>
<accession>B0UX30</accession>
<comment type="function">
    <text evidence="1">This is one of the proteins that bind and probably mediate the attachment of the 5S RNA into the large ribosomal subunit, where it forms part of the central protuberance.</text>
</comment>
<comment type="subunit">
    <text evidence="1">Part of the 50S ribosomal subunit; part of the 5S rRNA/L5/L18/L25 subcomplex. Contacts the 5S and 23S rRNAs.</text>
</comment>
<comment type="similarity">
    <text evidence="1">Belongs to the universal ribosomal protein uL18 family.</text>
</comment>
<reference key="1">
    <citation type="submission" date="2008-02" db="EMBL/GenBank/DDBJ databases">
        <title>Complete sequence of Haemophilus somnus 2336.</title>
        <authorList>
            <consortium name="US DOE Joint Genome Institute"/>
            <person name="Siddaramappa S."/>
            <person name="Duncan A.J."/>
            <person name="Challacombe J.F."/>
            <person name="Rainey D."/>
            <person name="Gillaspy A.F."/>
            <person name="Carson M."/>
            <person name="Gipson J."/>
            <person name="Gipson M."/>
            <person name="Bruce D."/>
            <person name="Detter J.C."/>
            <person name="Han C.S."/>
            <person name="Land M."/>
            <person name="Tapia R."/>
            <person name="Thompson L.S."/>
            <person name="Orvis J."/>
            <person name="Zaitshik J."/>
            <person name="Barnes G."/>
            <person name="Brettin T.S."/>
            <person name="Dyer D.W."/>
            <person name="Inzana T.J."/>
        </authorList>
    </citation>
    <scope>NUCLEOTIDE SEQUENCE [LARGE SCALE GENOMIC DNA]</scope>
    <source>
        <strain>2336</strain>
    </source>
</reference>
<sequence>MDKKSARIRRAARARHMMREQGVIRLVIHRTSRHIYAQVIAPNGSEVLATASTVEKAISEQVKYTGNKDAAAVVGKIVAERALEKGIKSVAFDRSGFKYHGRVQSLADAAREAGLQF</sequence>
<proteinExistence type="inferred from homology"/>
<organism>
    <name type="scientific">Histophilus somni (strain 2336)</name>
    <name type="common">Haemophilus somnus</name>
    <dbReference type="NCBI Taxonomy" id="228400"/>
    <lineage>
        <taxon>Bacteria</taxon>
        <taxon>Pseudomonadati</taxon>
        <taxon>Pseudomonadota</taxon>
        <taxon>Gammaproteobacteria</taxon>
        <taxon>Pasteurellales</taxon>
        <taxon>Pasteurellaceae</taxon>
        <taxon>Histophilus</taxon>
    </lineage>
</organism>
<feature type="chain" id="PRO_1000086668" description="Large ribosomal subunit protein uL18">
    <location>
        <begin position="1"/>
        <end position="117"/>
    </location>
</feature>
<name>RL18_HISS2</name>
<keyword id="KW-0687">Ribonucleoprotein</keyword>
<keyword id="KW-0689">Ribosomal protein</keyword>
<keyword id="KW-0694">RNA-binding</keyword>
<keyword id="KW-0699">rRNA-binding</keyword>
<dbReference type="EMBL" id="CP000947">
    <property type="protein sequence ID" value="ACA31764.1"/>
    <property type="molecule type" value="Genomic_DNA"/>
</dbReference>
<dbReference type="RefSeq" id="WP_011608231.1">
    <property type="nucleotide sequence ID" value="NC_010519.1"/>
</dbReference>
<dbReference type="SMR" id="B0UX30"/>
<dbReference type="STRING" id="228400.HSM_1969"/>
<dbReference type="GeneID" id="31488280"/>
<dbReference type="KEGG" id="hsm:HSM_1969"/>
<dbReference type="HOGENOM" id="CLU_098841_0_1_6"/>
<dbReference type="GO" id="GO:0022625">
    <property type="term" value="C:cytosolic large ribosomal subunit"/>
    <property type="evidence" value="ECO:0007669"/>
    <property type="project" value="TreeGrafter"/>
</dbReference>
<dbReference type="GO" id="GO:0008097">
    <property type="term" value="F:5S rRNA binding"/>
    <property type="evidence" value="ECO:0007669"/>
    <property type="project" value="TreeGrafter"/>
</dbReference>
<dbReference type="GO" id="GO:0003735">
    <property type="term" value="F:structural constituent of ribosome"/>
    <property type="evidence" value="ECO:0007669"/>
    <property type="project" value="InterPro"/>
</dbReference>
<dbReference type="GO" id="GO:0006412">
    <property type="term" value="P:translation"/>
    <property type="evidence" value="ECO:0007669"/>
    <property type="project" value="UniProtKB-UniRule"/>
</dbReference>
<dbReference type="CDD" id="cd00432">
    <property type="entry name" value="Ribosomal_L18_L5e"/>
    <property type="match status" value="1"/>
</dbReference>
<dbReference type="FunFam" id="3.30.420.100:FF:000001">
    <property type="entry name" value="50S ribosomal protein L18"/>
    <property type="match status" value="1"/>
</dbReference>
<dbReference type="Gene3D" id="3.30.420.100">
    <property type="match status" value="1"/>
</dbReference>
<dbReference type="HAMAP" id="MF_01337_B">
    <property type="entry name" value="Ribosomal_uL18_B"/>
    <property type="match status" value="1"/>
</dbReference>
<dbReference type="InterPro" id="IPR004389">
    <property type="entry name" value="Ribosomal_uL18_bac-type"/>
</dbReference>
<dbReference type="InterPro" id="IPR005484">
    <property type="entry name" value="Ribosomal_uL18_bac/euk"/>
</dbReference>
<dbReference type="NCBIfam" id="TIGR00060">
    <property type="entry name" value="L18_bact"/>
    <property type="match status" value="1"/>
</dbReference>
<dbReference type="PANTHER" id="PTHR12899">
    <property type="entry name" value="39S RIBOSOMAL PROTEIN L18, MITOCHONDRIAL"/>
    <property type="match status" value="1"/>
</dbReference>
<dbReference type="PANTHER" id="PTHR12899:SF3">
    <property type="entry name" value="LARGE RIBOSOMAL SUBUNIT PROTEIN UL18M"/>
    <property type="match status" value="1"/>
</dbReference>
<dbReference type="Pfam" id="PF00861">
    <property type="entry name" value="Ribosomal_L18p"/>
    <property type="match status" value="1"/>
</dbReference>
<dbReference type="SUPFAM" id="SSF53137">
    <property type="entry name" value="Translational machinery components"/>
    <property type="match status" value="1"/>
</dbReference>
<gene>
    <name evidence="1" type="primary">rplR</name>
    <name type="ordered locus">HSM_1969</name>
</gene>